<accession>D1A2S9</accession>
<comment type="function">
    <text evidence="1">Component of the proteasome core, a large protease complex with broad specificity involved in protein degradation.</text>
</comment>
<comment type="catalytic activity">
    <reaction evidence="1">
        <text>Cleavage of peptide bonds with very broad specificity.</text>
        <dbReference type="EC" id="3.4.25.1"/>
    </reaction>
</comment>
<comment type="activity regulation">
    <text evidence="1">The formation of the proteasomal ATPase ARC-20S proteasome complex, likely via the docking of the C-termini of ARC into the intersubunit pockets in the alpha-rings, may trigger opening of the gate for substrate entry. Interconversion between the open-gate and close-gate conformations leads to a dynamic regulation of the 20S proteasome proteolysis activity.</text>
</comment>
<comment type="pathway">
    <text evidence="1">Protein degradation; proteasomal Pup-dependent pathway.</text>
</comment>
<comment type="subunit">
    <text evidence="1">The 20S proteasome core is composed of 14 alpha and 14 beta subunits that assemble into four stacked heptameric rings, resulting in a barrel-shaped structure. The two inner rings, each composed of seven catalytic beta subunits, are sandwiched by two outer rings, each composed of seven alpha subunits. The catalytic chamber with the active sites is on the inside of the barrel. Has a gated structure, the ends of the cylinder being occluded by the N-termini of the alpha-subunits. Is capped by the proteasome-associated ATPase, ARC.</text>
</comment>
<comment type="subcellular location">
    <subcellularLocation>
        <location evidence="1">Cytoplasm</location>
    </subcellularLocation>
</comment>
<comment type="similarity">
    <text evidence="1">Belongs to the peptidase T1B family.</text>
</comment>
<gene>
    <name evidence="1" type="primary">prcB1</name>
    <name type="ordered locus">Tcur_2311</name>
</gene>
<proteinExistence type="inferred from homology"/>
<reference key="1">
    <citation type="journal article" date="2011" name="Stand. Genomic Sci.">
        <title>Complete genome sequence of Thermomonospora curvata type strain (B9).</title>
        <authorList>
            <person name="Chertkov O."/>
            <person name="Sikorski J."/>
            <person name="Nolan M."/>
            <person name="Lapidus A."/>
            <person name="Lucas S."/>
            <person name="Del Rio T.G."/>
            <person name="Tice H."/>
            <person name="Cheng J.F."/>
            <person name="Goodwin L."/>
            <person name="Pitluck S."/>
            <person name="Liolios K."/>
            <person name="Ivanova N."/>
            <person name="Mavromatis K."/>
            <person name="Mikhailova N."/>
            <person name="Ovchinnikova G."/>
            <person name="Pati A."/>
            <person name="Chen A."/>
            <person name="Palaniappan K."/>
            <person name="Djao O.D."/>
            <person name="Land M."/>
            <person name="Hauser L."/>
            <person name="Chang Y.J."/>
            <person name="Jeffries C.D."/>
            <person name="Brettin T."/>
            <person name="Han C."/>
            <person name="Detter J.C."/>
            <person name="Rohde M."/>
            <person name="Goeker M."/>
            <person name="Woyke T."/>
            <person name="Bristow J."/>
            <person name="Eisen J.A."/>
            <person name="Markowitz V."/>
            <person name="Hugenholtz P."/>
            <person name="Klenk H.P."/>
            <person name="Kyrpides N.C."/>
        </authorList>
    </citation>
    <scope>NUCLEOTIDE SEQUENCE [LARGE SCALE GENOMIC DNA]</scope>
    <source>
        <strain>ATCC 19995 / DSM 43183 / JCM 3096 / KCTC 9072 / NBRC 15933 / NCIMB 10081 / Henssen B9</strain>
    </source>
</reference>
<protein>
    <recommendedName>
        <fullName evidence="1">Proteasome subunit beta 1</fullName>
        <ecNumber evidence="1">3.4.25.1</ecNumber>
    </recommendedName>
    <alternativeName>
        <fullName evidence="1">20S proteasome beta subunit 1</fullName>
    </alternativeName>
    <alternativeName>
        <fullName evidence="1">Proteasome core protein PrcB 1</fullName>
    </alternativeName>
</protein>
<dbReference type="EC" id="3.4.25.1" evidence="1"/>
<dbReference type="EMBL" id="CP001738">
    <property type="protein sequence ID" value="ACY97877.1"/>
    <property type="molecule type" value="Genomic_DNA"/>
</dbReference>
<dbReference type="SMR" id="D1A2S9"/>
<dbReference type="STRING" id="471852.Tcur_2311"/>
<dbReference type="MEROPS" id="T01.005"/>
<dbReference type="KEGG" id="tcu:Tcur_2311"/>
<dbReference type="eggNOG" id="COG0638">
    <property type="taxonomic scope" value="Bacteria"/>
</dbReference>
<dbReference type="HOGENOM" id="CLU_035750_2_0_11"/>
<dbReference type="OrthoDB" id="5174038at2"/>
<dbReference type="UniPathway" id="UPA00997"/>
<dbReference type="Proteomes" id="UP000001918">
    <property type="component" value="Chromosome"/>
</dbReference>
<dbReference type="GO" id="GO:0005737">
    <property type="term" value="C:cytoplasm"/>
    <property type="evidence" value="ECO:0007669"/>
    <property type="project" value="UniProtKB-SubCell"/>
</dbReference>
<dbReference type="GO" id="GO:0019774">
    <property type="term" value="C:proteasome core complex, beta-subunit complex"/>
    <property type="evidence" value="ECO:0007669"/>
    <property type="project" value="UniProtKB-UniRule"/>
</dbReference>
<dbReference type="GO" id="GO:0004298">
    <property type="term" value="F:threonine-type endopeptidase activity"/>
    <property type="evidence" value="ECO:0007669"/>
    <property type="project" value="UniProtKB-UniRule"/>
</dbReference>
<dbReference type="GO" id="GO:0019941">
    <property type="term" value="P:modification-dependent protein catabolic process"/>
    <property type="evidence" value="ECO:0007669"/>
    <property type="project" value="UniProtKB-UniRule"/>
</dbReference>
<dbReference type="GO" id="GO:0010498">
    <property type="term" value="P:proteasomal protein catabolic process"/>
    <property type="evidence" value="ECO:0007669"/>
    <property type="project" value="UniProtKB-UniRule"/>
</dbReference>
<dbReference type="CDD" id="cd01906">
    <property type="entry name" value="proteasome_protease_HslV"/>
    <property type="match status" value="1"/>
</dbReference>
<dbReference type="Gene3D" id="3.60.20.10">
    <property type="entry name" value="Glutamine Phosphoribosylpyrophosphate, subunit 1, domain 1"/>
    <property type="match status" value="1"/>
</dbReference>
<dbReference type="HAMAP" id="MF_02113_B">
    <property type="entry name" value="Proteasome_B_B"/>
    <property type="match status" value="1"/>
</dbReference>
<dbReference type="InterPro" id="IPR029055">
    <property type="entry name" value="Ntn_hydrolases_N"/>
</dbReference>
<dbReference type="InterPro" id="IPR000243">
    <property type="entry name" value="Pept_T1A_subB"/>
</dbReference>
<dbReference type="InterPro" id="IPR001353">
    <property type="entry name" value="Proteasome_sua/b"/>
</dbReference>
<dbReference type="InterPro" id="IPR023333">
    <property type="entry name" value="Proteasome_suB-type"/>
</dbReference>
<dbReference type="InterPro" id="IPR022483">
    <property type="entry name" value="PSB_actinobac"/>
</dbReference>
<dbReference type="NCBIfam" id="TIGR03690">
    <property type="entry name" value="20S_bact_beta"/>
    <property type="match status" value="1"/>
</dbReference>
<dbReference type="PANTHER" id="PTHR32194:SF0">
    <property type="entry name" value="ATP-DEPENDENT PROTEASE SUBUNIT HSLV"/>
    <property type="match status" value="1"/>
</dbReference>
<dbReference type="PANTHER" id="PTHR32194">
    <property type="entry name" value="METALLOPROTEASE TLDD"/>
    <property type="match status" value="1"/>
</dbReference>
<dbReference type="Pfam" id="PF00227">
    <property type="entry name" value="Proteasome"/>
    <property type="match status" value="1"/>
</dbReference>
<dbReference type="PRINTS" id="PR00141">
    <property type="entry name" value="PROTEASOME"/>
</dbReference>
<dbReference type="SUPFAM" id="SSF56235">
    <property type="entry name" value="N-terminal nucleophile aminohydrolases (Ntn hydrolases)"/>
    <property type="match status" value="1"/>
</dbReference>
<dbReference type="PROSITE" id="PS51476">
    <property type="entry name" value="PROTEASOME_BETA_2"/>
    <property type="match status" value="1"/>
</dbReference>
<name>PSB1_THECD</name>
<feature type="propeptide" id="PRO_0000397596" description="Removed in mature form; by autocatalysis" evidence="1">
    <location>
        <begin position="1"/>
        <end position="56"/>
    </location>
</feature>
<feature type="chain" id="PRO_0000397597" description="Proteasome subunit beta 1">
    <location>
        <begin position="57"/>
        <end position="284"/>
    </location>
</feature>
<feature type="active site" description="Nucleophile" evidence="1">
    <location>
        <position position="57"/>
    </location>
</feature>
<sequence>MASHDSYTGRLPGAFMNPGTSSFTEFLASYNPDLLPGRHMTALAGGMPGNVEAPHATTIVAVTFPGGVVMAGDRRATAGNMIAQRDVEKVFRADEFSAVAIAGTAGIGMEIVRLFQVEIEHYEKMEGRTLSLEGKANRLATMIRANLGMAMQGLVAVPLFAGYDTEREVGRIFSYDPAGGRYEEHEHHSIGSGSVFARGALKKLWRPDLSAQDAALVCVQALYDAADDDSATGGPDLIRKIYPVVATVTADGFRRLPEEEVGELARIVVDGRHDSPGGPTAPLR</sequence>
<organism>
    <name type="scientific">Thermomonospora curvata (strain ATCC 19995 / DSM 43183 / JCM 3096 / KCTC 9072 / NBRC 15933 / NCIMB 10081 / Henssen B9)</name>
    <dbReference type="NCBI Taxonomy" id="471852"/>
    <lineage>
        <taxon>Bacteria</taxon>
        <taxon>Bacillati</taxon>
        <taxon>Actinomycetota</taxon>
        <taxon>Actinomycetes</taxon>
        <taxon>Streptosporangiales</taxon>
        <taxon>Thermomonosporaceae</taxon>
        <taxon>Thermomonospora</taxon>
    </lineage>
</organism>
<keyword id="KW-0068">Autocatalytic cleavage</keyword>
<keyword id="KW-0963">Cytoplasm</keyword>
<keyword id="KW-0378">Hydrolase</keyword>
<keyword id="KW-0645">Protease</keyword>
<keyword id="KW-0647">Proteasome</keyword>
<keyword id="KW-1185">Reference proteome</keyword>
<keyword id="KW-0888">Threonine protease</keyword>
<keyword id="KW-0865">Zymogen</keyword>
<evidence type="ECO:0000255" key="1">
    <source>
        <dbReference type="HAMAP-Rule" id="MF_02113"/>
    </source>
</evidence>